<sequence length="90" mass="10381">MLVVWQKLPKERMRENDKENEREHVKRKIWSAAAPGNKCEERERCKEDEYIQYILAYSKLSAGSIAYSGITATRVKINMVTNDGFGSTVL</sequence>
<dbReference type="EMBL" id="BK006945">
    <property type="protein sequence ID" value="DAD54809.1"/>
    <property type="molecule type" value="Genomic_DNA"/>
</dbReference>
<dbReference type="RefSeq" id="NP_001381968.1">
    <property type="nucleotide sequence ID" value="NM_001395038.1"/>
</dbReference>
<dbReference type="GeneID" id="65052912"/>
<dbReference type="SGD" id="S000303812">
    <property type="gene designation" value="YLR379W-A"/>
</dbReference>
<dbReference type="InParanoid" id="A0A8D9UGQ7"/>
<dbReference type="OrthoDB" id="10377733at2759"/>
<dbReference type="PRO" id="PR:A0A8D9UGQ7"/>
<dbReference type="Proteomes" id="UP000002311">
    <property type="component" value="Chromosome XII"/>
</dbReference>
<evidence type="ECO:0000305" key="1"/>
<evidence type="ECO:0000312" key="2">
    <source>
        <dbReference type="SGD" id="S000303812"/>
    </source>
</evidence>
<feature type="chain" id="PRO_0000455992" description="Uncharacterized protein YLR379W-A">
    <location>
        <begin position="1"/>
        <end position="90"/>
    </location>
</feature>
<protein>
    <recommendedName>
        <fullName evidence="1">Uncharacterized protein YLR379W-A</fullName>
    </recommendedName>
</protein>
<gene>
    <name evidence="2" type="ordered locus">YLR379W-A</name>
</gene>
<name>YL79A_YEAST</name>
<accession>A0A8D9UGQ7</accession>
<keyword id="KW-1185">Reference proteome</keyword>
<proteinExistence type="predicted"/>
<reference key="1">
    <citation type="journal article" date="1997" name="Nature">
        <title>The nucleotide sequence of Saccharomyces cerevisiae chromosome XII.</title>
        <authorList>
            <person name="Johnston M."/>
            <person name="Hillier L.W."/>
            <person name="Riles L."/>
            <person name="Albermann K."/>
            <person name="Andre B."/>
            <person name="Ansorge W."/>
            <person name="Benes V."/>
            <person name="Brueckner M."/>
            <person name="Delius H."/>
            <person name="Dubois E."/>
            <person name="Duesterhoeft A."/>
            <person name="Entian K.-D."/>
            <person name="Floeth M."/>
            <person name="Goffeau A."/>
            <person name="Hebling U."/>
            <person name="Heumann K."/>
            <person name="Heuss-Neitzel D."/>
            <person name="Hilbert H."/>
            <person name="Hilger F."/>
            <person name="Kleine K."/>
            <person name="Koetter P."/>
            <person name="Louis E.J."/>
            <person name="Messenguy F."/>
            <person name="Mewes H.-W."/>
            <person name="Miosga T."/>
            <person name="Moestl D."/>
            <person name="Mueller-Auer S."/>
            <person name="Nentwich U."/>
            <person name="Obermaier B."/>
            <person name="Piravandi E."/>
            <person name="Pohl T.M."/>
            <person name="Portetelle D."/>
            <person name="Purnelle B."/>
            <person name="Rechmann S."/>
            <person name="Rieger M."/>
            <person name="Rinke M."/>
            <person name="Rose M."/>
            <person name="Scharfe M."/>
            <person name="Scherens B."/>
            <person name="Scholler P."/>
            <person name="Schwager C."/>
            <person name="Schwarz S."/>
            <person name="Underwood A.P."/>
            <person name="Urrestarazu L.A."/>
            <person name="Vandenbol M."/>
            <person name="Verhasselt P."/>
            <person name="Vierendeels F."/>
            <person name="Voet M."/>
            <person name="Volckaert G."/>
            <person name="Voss H."/>
            <person name="Wambutt R."/>
            <person name="Wedler E."/>
            <person name="Wedler H."/>
            <person name="Zimmermann F.K."/>
            <person name="Zollner A."/>
            <person name="Hani J."/>
            <person name="Hoheisel J.D."/>
        </authorList>
    </citation>
    <scope>NUCLEOTIDE SEQUENCE [LARGE SCALE GENOMIC DNA]</scope>
    <source>
        <strain>ATCC 204508 / S288c</strain>
    </source>
</reference>
<reference key="2">
    <citation type="journal article" date="2014" name="G3 (Bethesda)">
        <title>The reference genome sequence of Saccharomyces cerevisiae: Then and now.</title>
        <authorList>
            <person name="Engel S.R."/>
            <person name="Dietrich F.S."/>
            <person name="Fisk D.G."/>
            <person name="Binkley G."/>
            <person name="Balakrishnan R."/>
            <person name="Costanzo M.C."/>
            <person name="Dwight S.S."/>
            <person name="Hitz B.C."/>
            <person name="Karra K."/>
            <person name="Nash R.S."/>
            <person name="Weng S."/>
            <person name="Wong E.D."/>
            <person name="Lloyd P."/>
            <person name="Skrzypek M.S."/>
            <person name="Miyasato S.R."/>
            <person name="Simison M."/>
            <person name="Cherry J.M."/>
        </authorList>
    </citation>
    <scope>GENOME REANNOTATION</scope>
    <source>
        <strain>ATCC 204508 / S288c</strain>
    </source>
</reference>
<reference key="3">
    <citation type="journal article" date="2015" name="PLoS ONE">
        <title>AGAPE (Automated Genome Analysis PipelinE) for pan-genome analysis of Saccharomyces cerevisiae.</title>
        <authorList>
            <person name="Song G."/>
            <person name="Dickins B.J."/>
            <person name="Demeter J."/>
            <person name="Engel S."/>
            <person name="Gallagher J."/>
            <person name="Choe K."/>
            <person name="Dunn B."/>
            <person name="Snyder M."/>
            <person name="Cherry J.M."/>
        </authorList>
    </citation>
    <scope>IDENTIFICATION</scope>
</reference>
<organism>
    <name type="scientific">Saccharomyces cerevisiae (strain ATCC 204508 / S288c)</name>
    <name type="common">Baker's yeast</name>
    <dbReference type="NCBI Taxonomy" id="559292"/>
    <lineage>
        <taxon>Eukaryota</taxon>
        <taxon>Fungi</taxon>
        <taxon>Dikarya</taxon>
        <taxon>Ascomycota</taxon>
        <taxon>Saccharomycotina</taxon>
        <taxon>Saccharomycetes</taxon>
        <taxon>Saccharomycetales</taxon>
        <taxon>Saccharomycetaceae</taxon>
        <taxon>Saccharomyces</taxon>
    </lineage>
</organism>